<feature type="chain" id="PRO_1000021588" description="Nicotinate-nucleotide--dimethylbenzimidazole phosphoribosyltransferase">
    <location>
        <begin position="1"/>
        <end position="348"/>
    </location>
</feature>
<feature type="active site" description="Proton acceptor" evidence="1">
    <location>
        <position position="315"/>
    </location>
</feature>
<comment type="function">
    <text evidence="1">Catalyzes the synthesis of alpha-ribazole-5'-phosphate from nicotinate mononucleotide (NAMN) and 5,6-dimethylbenzimidazole (DMB).</text>
</comment>
<comment type="catalytic activity">
    <reaction evidence="1">
        <text>5,6-dimethylbenzimidazole + nicotinate beta-D-ribonucleotide = alpha-ribazole 5'-phosphate + nicotinate + H(+)</text>
        <dbReference type="Rhea" id="RHEA:11196"/>
        <dbReference type="ChEBI" id="CHEBI:15378"/>
        <dbReference type="ChEBI" id="CHEBI:15890"/>
        <dbReference type="ChEBI" id="CHEBI:32544"/>
        <dbReference type="ChEBI" id="CHEBI:57502"/>
        <dbReference type="ChEBI" id="CHEBI:57918"/>
        <dbReference type="EC" id="2.4.2.21"/>
    </reaction>
</comment>
<comment type="pathway">
    <text evidence="1">Nucleoside biosynthesis; alpha-ribazole biosynthesis; alpha-ribazole from 5,6-dimethylbenzimidazole: step 1/2.</text>
</comment>
<comment type="similarity">
    <text evidence="1">Belongs to the CobT family.</text>
</comment>
<reference key="1">
    <citation type="journal article" date="2009" name="BMC Genomics">
        <title>Metabolic analysis of the soil microbe Dechloromonas aromatica str. RCB: indications of a surprisingly complex life-style and cryptic anaerobic pathways for aromatic degradation.</title>
        <authorList>
            <person name="Salinero K.K."/>
            <person name="Keller K."/>
            <person name="Feil W.S."/>
            <person name="Feil H."/>
            <person name="Trong S."/>
            <person name="Di Bartolo G."/>
            <person name="Lapidus A."/>
        </authorList>
    </citation>
    <scope>NUCLEOTIDE SEQUENCE [LARGE SCALE GENOMIC DNA]</scope>
    <source>
        <strain>RCB</strain>
    </source>
</reference>
<sequence>MHSFEISIPDSGLETALQNKIDRKTKPLGALGLLEKTAKKIGLVQQTLTPQLNNPQMLVFAGDHGAAKAGVSAYPQDVTWQMVENFLAGGAAINVFARQNGLGLSVVDAGVAHDFGQRTGLIDAKVAAGTANYIEQAAMTPAQCAQAIQNGAAIVRQLAAKGCNVVGFGEMGIGNTASASLLTHCLTGLPLAECVGRGTGLDDAGLARKQDLLEQALIRYRNAGGNNDAGAVLAEFGGFEIATMVGAMLAAAEAKMVLLIDGFIVGSAALIASRLAPALLDYCVFCHRSAEAGHRTQLLAMGAEPLLDLGLRLGEGTGAALAYPLVQSAVSFLNEMASFESAGVSDKE</sequence>
<name>COBT_DECAR</name>
<gene>
    <name evidence="1" type="primary">cobT</name>
    <name type="ordered locus">Daro_0148</name>
</gene>
<evidence type="ECO:0000255" key="1">
    <source>
        <dbReference type="HAMAP-Rule" id="MF_00230"/>
    </source>
</evidence>
<proteinExistence type="inferred from homology"/>
<keyword id="KW-0169">Cobalamin biosynthesis</keyword>
<keyword id="KW-0328">Glycosyltransferase</keyword>
<keyword id="KW-0808">Transferase</keyword>
<protein>
    <recommendedName>
        <fullName evidence="1">Nicotinate-nucleotide--dimethylbenzimidazole phosphoribosyltransferase</fullName>
        <shortName evidence="1">NN:DBI PRT</shortName>
        <ecNumber evidence="1">2.4.2.21</ecNumber>
    </recommendedName>
    <alternativeName>
        <fullName evidence="1">N(1)-alpha-phosphoribosyltransferase</fullName>
    </alternativeName>
</protein>
<organism>
    <name type="scientific">Dechloromonas aromatica (strain RCB)</name>
    <dbReference type="NCBI Taxonomy" id="159087"/>
    <lineage>
        <taxon>Bacteria</taxon>
        <taxon>Pseudomonadati</taxon>
        <taxon>Pseudomonadota</taxon>
        <taxon>Betaproteobacteria</taxon>
        <taxon>Rhodocyclales</taxon>
        <taxon>Azonexaceae</taxon>
        <taxon>Dechloromonas</taxon>
    </lineage>
</organism>
<dbReference type="EC" id="2.4.2.21" evidence="1"/>
<dbReference type="EMBL" id="CP000089">
    <property type="protein sequence ID" value="AAZ44907.1"/>
    <property type="molecule type" value="Genomic_DNA"/>
</dbReference>
<dbReference type="SMR" id="Q47JS4"/>
<dbReference type="STRING" id="159087.Daro_0148"/>
<dbReference type="KEGG" id="dar:Daro_0148"/>
<dbReference type="eggNOG" id="COG2038">
    <property type="taxonomic scope" value="Bacteria"/>
</dbReference>
<dbReference type="HOGENOM" id="CLU_002982_0_0_4"/>
<dbReference type="OrthoDB" id="9781491at2"/>
<dbReference type="UniPathway" id="UPA00061">
    <property type="reaction ID" value="UER00516"/>
</dbReference>
<dbReference type="GO" id="GO:0008939">
    <property type="term" value="F:nicotinate-nucleotide-dimethylbenzimidazole phosphoribosyltransferase activity"/>
    <property type="evidence" value="ECO:0007669"/>
    <property type="project" value="UniProtKB-UniRule"/>
</dbReference>
<dbReference type="GO" id="GO:0009236">
    <property type="term" value="P:cobalamin biosynthetic process"/>
    <property type="evidence" value="ECO:0007669"/>
    <property type="project" value="UniProtKB-KW"/>
</dbReference>
<dbReference type="CDD" id="cd02439">
    <property type="entry name" value="DMB-PRT_CobT"/>
    <property type="match status" value="1"/>
</dbReference>
<dbReference type="FunFam" id="3.40.50.10210:FF:000001">
    <property type="entry name" value="Nicotinate-nucleotide--dimethylbenzimidazole phosphoribosyltransferase"/>
    <property type="match status" value="1"/>
</dbReference>
<dbReference type="Gene3D" id="1.10.1610.10">
    <property type="match status" value="1"/>
</dbReference>
<dbReference type="Gene3D" id="3.40.50.10210">
    <property type="match status" value="1"/>
</dbReference>
<dbReference type="HAMAP" id="MF_00230">
    <property type="entry name" value="CobT"/>
    <property type="match status" value="1"/>
</dbReference>
<dbReference type="InterPro" id="IPR003200">
    <property type="entry name" value="Nict_dMeBzImd_PRibTrfase"/>
</dbReference>
<dbReference type="InterPro" id="IPR017846">
    <property type="entry name" value="Nict_dMeBzImd_PRibTrfase_bact"/>
</dbReference>
<dbReference type="InterPro" id="IPR023195">
    <property type="entry name" value="Nict_dMeBzImd_PRibTrfase_N"/>
</dbReference>
<dbReference type="InterPro" id="IPR036087">
    <property type="entry name" value="Nict_dMeBzImd_PRibTrfase_sf"/>
</dbReference>
<dbReference type="NCBIfam" id="TIGR03160">
    <property type="entry name" value="cobT_DBIPRT"/>
    <property type="match status" value="1"/>
</dbReference>
<dbReference type="NCBIfam" id="NF000996">
    <property type="entry name" value="PRK00105.1"/>
    <property type="match status" value="1"/>
</dbReference>
<dbReference type="PANTHER" id="PTHR43463">
    <property type="entry name" value="NICOTINATE-NUCLEOTIDE--DIMETHYLBENZIMIDAZOLE PHOSPHORIBOSYLTRANSFERASE"/>
    <property type="match status" value="1"/>
</dbReference>
<dbReference type="PANTHER" id="PTHR43463:SF1">
    <property type="entry name" value="NICOTINATE-NUCLEOTIDE--DIMETHYLBENZIMIDAZOLE PHOSPHORIBOSYLTRANSFERASE"/>
    <property type="match status" value="1"/>
</dbReference>
<dbReference type="Pfam" id="PF02277">
    <property type="entry name" value="DBI_PRT"/>
    <property type="match status" value="1"/>
</dbReference>
<dbReference type="SUPFAM" id="SSF52733">
    <property type="entry name" value="Nicotinate mononucleotide:5,6-dimethylbenzimidazole phosphoribosyltransferase (CobT)"/>
    <property type="match status" value="1"/>
</dbReference>
<accession>Q47JS4</accession>